<feature type="chain" id="PRO_0000057036" description="RNA pyrophosphohydrolase">
    <location>
        <begin position="1"/>
        <end position="205"/>
    </location>
</feature>
<feature type="domain" description="Nudix hydrolase" evidence="1">
    <location>
        <begin position="6"/>
        <end position="149"/>
    </location>
</feature>
<feature type="region of interest" description="Disordered" evidence="2">
    <location>
        <begin position="178"/>
        <end position="205"/>
    </location>
</feature>
<feature type="short sequence motif" description="Nudix box">
    <location>
        <begin position="38"/>
        <end position="59"/>
    </location>
</feature>
<feature type="compositionally biased region" description="Basic residues" evidence="2">
    <location>
        <begin position="186"/>
        <end position="195"/>
    </location>
</feature>
<organism>
    <name type="scientific">Xanthomonas campestris pv. campestris (strain ATCC 33913 / DSM 3586 / NCPPB 528 / LMG 568 / P 25)</name>
    <dbReference type="NCBI Taxonomy" id="190485"/>
    <lineage>
        <taxon>Bacteria</taxon>
        <taxon>Pseudomonadati</taxon>
        <taxon>Pseudomonadota</taxon>
        <taxon>Gammaproteobacteria</taxon>
        <taxon>Lysobacterales</taxon>
        <taxon>Lysobacteraceae</taxon>
        <taxon>Xanthomonas</taxon>
    </lineage>
</organism>
<evidence type="ECO:0000255" key="1">
    <source>
        <dbReference type="HAMAP-Rule" id="MF_00298"/>
    </source>
</evidence>
<evidence type="ECO:0000256" key="2">
    <source>
        <dbReference type="SAM" id="MobiDB-lite"/>
    </source>
</evidence>
<comment type="function">
    <text evidence="1">Accelerates the degradation of transcripts by removing pyrophosphate from the 5'-end of triphosphorylated RNA, leading to a more labile monophosphorylated state that can stimulate subsequent ribonuclease cleavage.</text>
</comment>
<comment type="cofactor">
    <cofactor evidence="1">
        <name>a divalent metal cation</name>
        <dbReference type="ChEBI" id="CHEBI:60240"/>
    </cofactor>
</comment>
<comment type="similarity">
    <text evidence="1">Belongs to the Nudix hydrolase family. RppH subfamily.</text>
</comment>
<name>RPPH_XANCP</name>
<dbReference type="EC" id="3.6.1.-" evidence="1"/>
<dbReference type="EMBL" id="AE008922">
    <property type="protein sequence ID" value="AAM39796.1"/>
    <property type="molecule type" value="Genomic_DNA"/>
</dbReference>
<dbReference type="RefSeq" id="NP_635872.1">
    <property type="nucleotide sequence ID" value="NC_003902.1"/>
</dbReference>
<dbReference type="RefSeq" id="WP_011035729.1">
    <property type="nucleotide sequence ID" value="NC_003902.1"/>
</dbReference>
<dbReference type="SMR" id="Q8PD65"/>
<dbReference type="STRING" id="190485.XCC0480"/>
<dbReference type="EnsemblBacteria" id="AAM39796">
    <property type="protein sequence ID" value="AAM39796"/>
    <property type="gene ID" value="XCC0480"/>
</dbReference>
<dbReference type="KEGG" id="xcc:XCC0480"/>
<dbReference type="PATRIC" id="fig|190485.4.peg.525"/>
<dbReference type="eggNOG" id="COG1051">
    <property type="taxonomic scope" value="Bacteria"/>
</dbReference>
<dbReference type="HOGENOM" id="CLU_087195_3_1_6"/>
<dbReference type="OrthoDB" id="9816040at2"/>
<dbReference type="Proteomes" id="UP000001010">
    <property type="component" value="Chromosome"/>
</dbReference>
<dbReference type="GO" id="GO:0016462">
    <property type="term" value="F:pyrophosphatase activity"/>
    <property type="evidence" value="ECO:0007669"/>
    <property type="project" value="UniProtKB-ARBA"/>
</dbReference>
<dbReference type="CDD" id="cd03671">
    <property type="entry name" value="NUDIX_Ap4A_hydrolase_plant_like"/>
    <property type="match status" value="1"/>
</dbReference>
<dbReference type="FunFam" id="3.90.79.10:FF:000001">
    <property type="entry name" value="RNA pyrophosphohydrolase"/>
    <property type="match status" value="1"/>
</dbReference>
<dbReference type="Gene3D" id="3.90.79.10">
    <property type="entry name" value="Nucleoside Triphosphate Pyrophosphohydrolase"/>
    <property type="match status" value="1"/>
</dbReference>
<dbReference type="HAMAP" id="MF_00298">
    <property type="entry name" value="Nudix_RppH"/>
    <property type="match status" value="1"/>
</dbReference>
<dbReference type="InterPro" id="IPR015797">
    <property type="entry name" value="NUDIX_hydrolase-like_dom_sf"/>
</dbReference>
<dbReference type="InterPro" id="IPR020084">
    <property type="entry name" value="NUDIX_hydrolase_CS"/>
</dbReference>
<dbReference type="InterPro" id="IPR000086">
    <property type="entry name" value="NUDIX_hydrolase_dom"/>
</dbReference>
<dbReference type="InterPro" id="IPR022927">
    <property type="entry name" value="RppH"/>
</dbReference>
<dbReference type="NCBIfam" id="NF001937">
    <property type="entry name" value="PRK00714.1-4"/>
    <property type="match status" value="1"/>
</dbReference>
<dbReference type="NCBIfam" id="NF001938">
    <property type="entry name" value="PRK00714.1-5"/>
    <property type="match status" value="1"/>
</dbReference>
<dbReference type="PANTHER" id="PTHR43736">
    <property type="entry name" value="ADP-RIBOSE PYROPHOSPHATASE"/>
    <property type="match status" value="1"/>
</dbReference>
<dbReference type="PANTHER" id="PTHR43736:SF1">
    <property type="entry name" value="DIHYDRONEOPTERIN TRIPHOSPHATE DIPHOSPHATASE"/>
    <property type="match status" value="1"/>
</dbReference>
<dbReference type="Pfam" id="PF00293">
    <property type="entry name" value="NUDIX"/>
    <property type="match status" value="1"/>
</dbReference>
<dbReference type="SUPFAM" id="SSF55811">
    <property type="entry name" value="Nudix"/>
    <property type="match status" value="1"/>
</dbReference>
<dbReference type="PROSITE" id="PS51462">
    <property type="entry name" value="NUDIX"/>
    <property type="match status" value="1"/>
</dbReference>
<dbReference type="PROSITE" id="PS00893">
    <property type="entry name" value="NUDIX_BOX"/>
    <property type="match status" value="1"/>
</dbReference>
<proteinExistence type="inferred from homology"/>
<sequence>MIDPDGFRPNVGIVLMREDGQVFWARRVRRDGWQFPQGGMNTDETPVEAMYRELREETGLLPEHVELLGATPGWLRYRLPSRAVRRNERQVCIGQKQVWFLLQFTGQESHLKLDHTDSPEFDHWRWVDFWYPVEHVVMFKRGVYARALRHLAPLAQTVAGPAAVGVMPQRALEAWLPGSSAAGHDRPRKRPRKRGGVLPVRINND</sequence>
<protein>
    <recommendedName>
        <fullName evidence="1">RNA pyrophosphohydrolase</fullName>
        <ecNumber evidence="1">3.6.1.-</ecNumber>
    </recommendedName>
    <alternativeName>
        <fullName evidence="1">(Di)nucleoside polyphosphate hydrolase</fullName>
    </alternativeName>
</protein>
<accession>Q8PD65</accession>
<keyword id="KW-0378">Hydrolase</keyword>
<keyword id="KW-1185">Reference proteome</keyword>
<gene>
    <name evidence="1" type="primary">rppH</name>
    <name evidence="1" type="synonym">nudH</name>
    <name type="ordered locus">XCC0480</name>
</gene>
<reference key="1">
    <citation type="journal article" date="2002" name="Nature">
        <title>Comparison of the genomes of two Xanthomonas pathogens with differing host specificities.</title>
        <authorList>
            <person name="da Silva A.C.R."/>
            <person name="Ferro J.A."/>
            <person name="Reinach F.C."/>
            <person name="Farah C.S."/>
            <person name="Furlan L.R."/>
            <person name="Quaggio R.B."/>
            <person name="Monteiro-Vitorello C.B."/>
            <person name="Van Sluys M.A."/>
            <person name="Almeida N.F. Jr."/>
            <person name="Alves L.M.C."/>
            <person name="do Amaral A.M."/>
            <person name="Bertolini M.C."/>
            <person name="Camargo L.E.A."/>
            <person name="Camarotte G."/>
            <person name="Cannavan F."/>
            <person name="Cardozo J."/>
            <person name="Chambergo F."/>
            <person name="Ciapina L.P."/>
            <person name="Cicarelli R.M.B."/>
            <person name="Coutinho L.L."/>
            <person name="Cursino-Santos J.R."/>
            <person name="El-Dorry H."/>
            <person name="Faria J.B."/>
            <person name="Ferreira A.J.S."/>
            <person name="Ferreira R.C.C."/>
            <person name="Ferro M.I.T."/>
            <person name="Formighieri E.F."/>
            <person name="Franco M.C."/>
            <person name="Greggio C.C."/>
            <person name="Gruber A."/>
            <person name="Katsuyama A.M."/>
            <person name="Kishi L.T."/>
            <person name="Leite R.P."/>
            <person name="Lemos E.G.M."/>
            <person name="Lemos M.V.F."/>
            <person name="Locali E.C."/>
            <person name="Machado M.A."/>
            <person name="Madeira A.M.B.N."/>
            <person name="Martinez-Rossi N.M."/>
            <person name="Martins E.C."/>
            <person name="Meidanis J."/>
            <person name="Menck C.F.M."/>
            <person name="Miyaki C.Y."/>
            <person name="Moon D.H."/>
            <person name="Moreira L.M."/>
            <person name="Novo M.T.M."/>
            <person name="Okura V.K."/>
            <person name="Oliveira M.C."/>
            <person name="Oliveira V.R."/>
            <person name="Pereira H.A."/>
            <person name="Rossi A."/>
            <person name="Sena J.A.D."/>
            <person name="Silva C."/>
            <person name="de Souza R.F."/>
            <person name="Spinola L.A.F."/>
            <person name="Takita M.A."/>
            <person name="Tamura R.E."/>
            <person name="Teixeira E.C."/>
            <person name="Tezza R.I.D."/>
            <person name="Trindade dos Santos M."/>
            <person name="Truffi D."/>
            <person name="Tsai S.M."/>
            <person name="White F.F."/>
            <person name="Setubal J.C."/>
            <person name="Kitajima J.P."/>
        </authorList>
    </citation>
    <scope>NUCLEOTIDE SEQUENCE [LARGE SCALE GENOMIC DNA]</scope>
    <source>
        <strain>ATCC 33913 / DSM 3586 / NCPPB 528 / LMG 568 / P 25</strain>
    </source>
</reference>